<sequence length="312" mass="33715">MKWSEISIHTTEEAVEAVSHILHEAGASGVAIEDPAELTKEREQQYGEIYALNPDEYPAEGVLIKAYFPQTDSLHETIAGVKSSIDVLPSYDIEIGTGNITVNEVNEEDWATAWKKYYHPVQISDTFTIVPTWEEYTPSSPEEKIIELDPGMAFGTGTHPTTTMCIRALEKTVQPGDTIIDVGTGSGVLSIAAAKLGASSVQAYDLDPVAVESAEMNVRLNKTDDVVSVGQNSLLEGIEGPVDLIVANLLAEIILLFPEDAARVVKSGGLFITSGIIAAKEKVISEALEKAGFTIEEVLRMEDWVAIIARNA</sequence>
<dbReference type="EC" id="2.1.1.-" evidence="1"/>
<dbReference type="EMBL" id="CP001598">
    <property type="protein sequence ID" value="ACQ50196.1"/>
    <property type="molecule type" value="Genomic_DNA"/>
</dbReference>
<dbReference type="RefSeq" id="WP_000872105.1">
    <property type="nucleotide sequence ID" value="NC_012659.1"/>
</dbReference>
<dbReference type="SMR" id="C3P8L8"/>
<dbReference type="GeneID" id="45024189"/>
<dbReference type="KEGG" id="bai:BAA_4556"/>
<dbReference type="HOGENOM" id="CLU_049382_0_1_9"/>
<dbReference type="GO" id="GO:0005737">
    <property type="term" value="C:cytoplasm"/>
    <property type="evidence" value="ECO:0007669"/>
    <property type="project" value="UniProtKB-SubCell"/>
</dbReference>
<dbReference type="GO" id="GO:0016279">
    <property type="term" value="F:protein-lysine N-methyltransferase activity"/>
    <property type="evidence" value="ECO:0007669"/>
    <property type="project" value="RHEA"/>
</dbReference>
<dbReference type="GO" id="GO:0032259">
    <property type="term" value="P:methylation"/>
    <property type="evidence" value="ECO:0007669"/>
    <property type="project" value="UniProtKB-KW"/>
</dbReference>
<dbReference type="CDD" id="cd02440">
    <property type="entry name" value="AdoMet_MTases"/>
    <property type="match status" value="1"/>
</dbReference>
<dbReference type="Gene3D" id="3.40.50.150">
    <property type="entry name" value="Vaccinia Virus protein VP39"/>
    <property type="match status" value="1"/>
</dbReference>
<dbReference type="HAMAP" id="MF_00735">
    <property type="entry name" value="Methyltr_PrmA"/>
    <property type="match status" value="1"/>
</dbReference>
<dbReference type="InterPro" id="IPR050078">
    <property type="entry name" value="Ribosomal_L11_MeTrfase_PrmA"/>
</dbReference>
<dbReference type="InterPro" id="IPR004498">
    <property type="entry name" value="Ribosomal_PrmA_MeTrfase"/>
</dbReference>
<dbReference type="InterPro" id="IPR029063">
    <property type="entry name" value="SAM-dependent_MTases_sf"/>
</dbReference>
<dbReference type="NCBIfam" id="TIGR00406">
    <property type="entry name" value="prmA"/>
    <property type="match status" value="1"/>
</dbReference>
<dbReference type="PANTHER" id="PTHR43648">
    <property type="entry name" value="ELECTRON TRANSFER FLAVOPROTEIN BETA SUBUNIT LYSINE METHYLTRANSFERASE"/>
    <property type="match status" value="1"/>
</dbReference>
<dbReference type="PANTHER" id="PTHR43648:SF1">
    <property type="entry name" value="ELECTRON TRANSFER FLAVOPROTEIN BETA SUBUNIT LYSINE METHYLTRANSFERASE"/>
    <property type="match status" value="1"/>
</dbReference>
<dbReference type="Pfam" id="PF06325">
    <property type="entry name" value="PrmA"/>
    <property type="match status" value="1"/>
</dbReference>
<dbReference type="PIRSF" id="PIRSF000401">
    <property type="entry name" value="RPL11_MTase"/>
    <property type="match status" value="1"/>
</dbReference>
<dbReference type="SUPFAM" id="SSF53335">
    <property type="entry name" value="S-adenosyl-L-methionine-dependent methyltransferases"/>
    <property type="match status" value="1"/>
</dbReference>
<evidence type="ECO:0000255" key="1">
    <source>
        <dbReference type="HAMAP-Rule" id="MF_00735"/>
    </source>
</evidence>
<proteinExistence type="inferred from homology"/>
<feature type="chain" id="PRO_1000192577" description="Ribosomal protein L11 methyltransferase">
    <location>
        <begin position="1"/>
        <end position="312"/>
    </location>
</feature>
<feature type="binding site" evidence="1">
    <location>
        <position position="162"/>
    </location>
    <ligand>
        <name>S-adenosyl-L-methionine</name>
        <dbReference type="ChEBI" id="CHEBI:59789"/>
    </ligand>
</feature>
<feature type="binding site" evidence="1">
    <location>
        <position position="183"/>
    </location>
    <ligand>
        <name>S-adenosyl-L-methionine</name>
        <dbReference type="ChEBI" id="CHEBI:59789"/>
    </ligand>
</feature>
<feature type="binding site" evidence="1">
    <location>
        <position position="205"/>
    </location>
    <ligand>
        <name>S-adenosyl-L-methionine</name>
        <dbReference type="ChEBI" id="CHEBI:59789"/>
    </ligand>
</feature>
<feature type="binding site" evidence="1">
    <location>
        <position position="248"/>
    </location>
    <ligand>
        <name>S-adenosyl-L-methionine</name>
        <dbReference type="ChEBI" id="CHEBI:59789"/>
    </ligand>
</feature>
<name>PRMA_BACAA</name>
<accession>C3P8L8</accession>
<reference key="1">
    <citation type="submission" date="2009-04" db="EMBL/GenBank/DDBJ databases">
        <title>Genome sequence of Bacillus anthracis A0248.</title>
        <authorList>
            <person name="Dodson R.J."/>
            <person name="Munk A.C."/>
            <person name="Bruce D."/>
            <person name="Detter C."/>
            <person name="Tapia R."/>
            <person name="Sutton G."/>
            <person name="Sims D."/>
            <person name="Brettin T."/>
        </authorList>
    </citation>
    <scope>NUCLEOTIDE SEQUENCE [LARGE SCALE GENOMIC DNA]</scope>
    <source>
        <strain>A0248</strain>
    </source>
</reference>
<keyword id="KW-0963">Cytoplasm</keyword>
<keyword id="KW-0489">Methyltransferase</keyword>
<keyword id="KW-0949">S-adenosyl-L-methionine</keyword>
<keyword id="KW-0808">Transferase</keyword>
<protein>
    <recommendedName>
        <fullName evidence="1">Ribosomal protein L11 methyltransferase</fullName>
        <shortName evidence="1">L11 Mtase</shortName>
        <ecNumber evidence="1">2.1.1.-</ecNumber>
    </recommendedName>
</protein>
<comment type="function">
    <text evidence="1">Methylates ribosomal protein L11.</text>
</comment>
<comment type="catalytic activity">
    <reaction evidence="1">
        <text>L-lysyl-[protein] + 3 S-adenosyl-L-methionine = N(6),N(6),N(6)-trimethyl-L-lysyl-[protein] + 3 S-adenosyl-L-homocysteine + 3 H(+)</text>
        <dbReference type="Rhea" id="RHEA:54192"/>
        <dbReference type="Rhea" id="RHEA-COMP:9752"/>
        <dbReference type="Rhea" id="RHEA-COMP:13826"/>
        <dbReference type="ChEBI" id="CHEBI:15378"/>
        <dbReference type="ChEBI" id="CHEBI:29969"/>
        <dbReference type="ChEBI" id="CHEBI:57856"/>
        <dbReference type="ChEBI" id="CHEBI:59789"/>
        <dbReference type="ChEBI" id="CHEBI:61961"/>
    </reaction>
</comment>
<comment type="subcellular location">
    <subcellularLocation>
        <location evidence="1">Cytoplasm</location>
    </subcellularLocation>
</comment>
<comment type="similarity">
    <text evidence="1">Belongs to the methyltransferase superfamily. PrmA family.</text>
</comment>
<gene>
    <name evidence="1" type="primary">prmA</name>
    <name type="ordered locus">BAA_4556</name>
</gene>
<organism>
    <name type="scientific">Bacillus anthracis (strain A0248)</name>
    <dbReference type="NCBI Taxonomy" id="592021"/>
    <lineage>
        <taxon>Bacteria</taxon>
        <taxon>Bacillati</taxon>
        <taxon>Bacillota</taxon>
        <taxon>Bacilli</taxon>
        <taxon>Bacillales</taxon>
        <taxon>Bacillaceae</taxon>
        <taxon>Bacillus</taxon>
        <taxon>Bacillus cereus group</taxon>
    </lineage>
</organism>